<dbReference type="EMBL" id="CP000912">
    <property type="protein sequence ID" value="ABY40259.1"/>
    <property type="molecule type" value="Genomic_DNA"/>
</dbReference>
<dbReference type="RefSeq" id="WP_002967949.1">
    <property type="nucleotide sequence ID" value="NC_010167.1"/>
</dbReference>
<dbReference type="SMR" id="A9WWX3"/>
<dbReference type="GeneID" id="97533030"/>
<dbReference type="KEGG" id="bmt:BSUIS_B1327"/>
<dbReference type="HOGENOM" id="CLU_061463_1_1_5"/>
<dbReference type="Proteomes" id="UP000008545">
    <property type="component" value="Chromosome II"/>
</dbReference>
<dbReference type="GO" id="GO:0005737">
    <property type="term" value="C:cytoplasm"/>
    <property type="evidence" value="ECO:0007669"/>
    <property type="project" value="UniProtKB-ARBA"/>
</dbReference>
<dbReference type="GO" id="GO:1990904">
    <property type="term" value="C:ribonucleoprotein complex"/>
    <property type="evidence" value="ECO:0007669"/>
    <property type="project" value="UniProtKB-KW"/>
</dbReference>
<dbReference type="GO" id="GO:0005840">
    <property type="term" value="C:ribosome"/>
    <property type="evidence" value="ECO:0007669"/>
    <property type="project" value="UniProtKB-KW"/>
</dbReference>
<dbReference type="GO" id="GO:0019843">
    <property type="term" value="F:rRNA binding"/>
    <property type="evidence" value="ECO:0007669"/>
    <property type="project" value="UniProtKB-UniRule"/>
</dbReference>
<dbReference type="GO" id="GO:0003735">
    <property type="term" value="F:structural constituent of ribosome"/>
    <property type="evidence" value="ECO:0007669"/>
    <property type="project" value="InterPro"/>
</dbReference>
<dbReference type="GO" id="GO:0006412">
    <property type="term" value="P:translation"/>
    <property type="evidence" value="ECO:0007669"/>
    <property type="project" value="UniProtKB-UniRule"/>
</dbReference>
<dbReference type="HAMAP" id="MF_01363">
    <property type="entry name" value="Ribosomal_bL21"/>
    <property type="match status" value="1"/>
</dbReference>
<dbReference type="InterPro" id="IPR028909">
    <property type="entry name" value="bL21-like"/>
</dbReference>
<dbReference type="InterPro" id="IPR036164">
    <property type="entry name" value="bL21-like_sf"/>
</dbReference>
<dbReference type="InterPro" id="IPR001787">
    <property type="entry name" value="Ribosomal_bL21"/>
</dbReference>
<dbReference type="NCBIfam" id="TIGR00061">
    <property type="entry name" value="L21"/>
    <property type="match status" value="1"/>
</dbReference>
<dbReference type="PANTHER" id="PTHR21349">
    <property type="entry name" value="50S RIBOSOMAL PROTEIN L21"/>
    <property type="match status" value="1"/>
</dbReference>
<dbReference type="PANTHER" id="PTHR21349:SF0">
    <property type="entry name" value="LARGE RIBOSOMAL SUBUNIT PROTEIN BL21M"/>
    <property type="match status" value="1"/>
</dbReference>
<dbReference type="Pfam" id="PF00829">
    <property type="entry name" value="Ribosomal_L21p"/>
    <property type="match status" value="1"/>
</dbReference>
<dbReference type="SUPFAM" id="SSF141091">
    <property type="entry name" value="L21p-like"/>
    <property type="match status" value="1"/>
</dbReference>
<name>RL21_BRUSI</name>
<feature type="chain" id="PRO_1000086971" description="Large ribosomal subunit protein bL21">
    <location>
        <begin position="1"/>
        <end position="142"/>
    </location>
</feature>
<feature type="region of interest" description="Disordered" evidence="2">
    <location>
        <begin position="74"/>
        <end position="142"/>
    </location>
</feature>
<feature type="compositionally biased region" description="Basic residues" evidence="2">
    <location>
        <begin position="74"/>
        <end position="84"/>
    </location>
</feature>
<feature type="compositionally biased region" description="Basic and acidic residues" evidence="2">
    <location>
        <begin position="107"/>
        <end position="125"/>
    </location>
</feature>
<feature type="compositionally biased region" description="Basic residues" evidence="2">
    <location>
        <begin position="126"/>
        <end position="135"/>
    </location>
</feature>
<gene>
    <name evidence="1" type="primary">rplU</name>
    <name type="ordered locus">BSUIS_B1327</name>
</gene>
<reference key="1">
    <citation type="submission" date="2007-12" db="EMBL/GenBank/DDBJ databases">
        <title>Brucella suis ATCC 23445 whole genome shotgun sequencing project.</title>
        <authorList>
            <person name="Setubal J.C."/>
            <person name="Bowns C."/>
            <person name="Boyle S."/>
            <person name="Crasta O.R."/>
            <person name="Czar M.J."/>
            <person name="Dharmanolla C."/>
            <person name="Gillespie J.J."/>
            <person name="Kenyon R.W."/>
            <person name="Lu J."/>
            <person name="Mane S."/>
            <person name="Mohapatra S."/>
            <person name="Nagrani S."/>
            <person name="Purkayastha A."/>
            <person name="Rajasimha H.K."/>
            <person name="Shallom J.M."/>
            <person name="Shallom S."/>
            <person name="Shukla M."/>
            <person name="Snyder E.E."/>
            <person name="Sobral B.W."/>
            <person name="Wattam A.R."/>
            <person name="Will R."/>
            <person name="Williams K."/>
            <person name="Yoo H."/>
            <person name="Bruce D."/>
            <person name="Detter C."/>
            <person name="Munk C."/>
            <person name="Brettin T.S."/>
        </authorList>
    </citation>
    <scope>NUCLEOTIDE SEQUENCE [LARGE SCALE GENOMIC DNA]</scope>
    <source>
        <strain>ATCC 23445 / NCTC 10510</strain>
    </source>
</reference>
<organism>
    <name type="scientific">Brucella suis (strain ATCC 23445 / NCTC 10510)</name>
    <dbReference type="NCBI Taxonomy" id="470137"/>
    <lineage>
        <taxon>Bacteria</taxon>
        <taxon>Pseudomonadati</taxon>
        <taxon>Pseudomonadota</taxon>
        <taxon>Alphaproteobacteria</taxon>
        <taxon>Hyphomicrobiales</taxon>
        <taxon>Brucellaceae</taxon>
        <taxon>Brucella/Ochrobactrum group</taxon>
        <taxon>Brucella</taxon>
    </lineage>
</organism>
<evidence type="ECO:0000255" key="1">
    <source>
        <dbReference type="HAMAP-Rule" id="MF_01363"/>
    </source>
</evidence>
<evidence type="ECO:0000256" key="2">
    <source>
        <dbReference type="SAM" id="MobiDB-lite"/>
    </source>
</evidence>
<evidence type="ECO:0000305" key="3"/>
<protein>
    <recommendedName>
        <fullName evidence="1">Large ribosomal subunit protein bL21</fullName>
    </recommendedName>
    <alternativeName>
        <fullName evidence="3">50S ribosomal protein L21</fullName>
    </alternativeName>
</protein>
<sequence length="142" mass="15021">MFAVIKTGGKQYRVAANDLIKVEKVAGEAGDIVEFAEVLMVGSTIGAPTVAGALVTAEVVEQGRGRKVIAFKKRRRQNSKRTRGHRQELTTIRISEILTDGAKPSKKAAEKKAPKADAAEGEAAKPKKAAPKKAAAKAESAE</sequence>
<accession>A9WWX3</accession>
<proteinExistence type="inferred from homology"/>
<keyword id="KW-0687">Ribonucleoprotein</keyword>
<keyword id="KW-0689">Ribosomal protein</keyword>
<keyword id="KW-0694">RNA-binding</keyword>
<keyword id="KW-0699">rRNA-binding</keyword>
<comment type="function">
    <text evidence="1">This protein binds to 23S rRNA in the presence of protein L20.</text>
</comment>
<comment type="subunit">
    <text evidence="1">Part of the 50S ribosomal subunit. Contacts protein L20.</text>
</comment>
<comment type="similarity">
    <text evidence="1">Belongs to the bacterial ribosomal protein bL21 family.</text>
</comment>